<keyword id="KW-0963">Cytoplasm</keyword>
<keyword id="KW-0489">Methyltransferase</keyword>
<keyword id="KW-0949">S-adenosyl-L-methionine</keyword>
<keyword id="KW-0808">Transferase</keyword>
<accession>A6LRN8</accession>
<proteinExistence type="inferred from homology"/>
<comment type="function">
    <text evidence="1">Methylates ribosomal protein L11.</text>
</comment>
<comment type="catalytic activity">
    <reaction evidence="1">
        <text>L-lysyl-[protein] + 3 S-adenosyl-L-methionine = N(6),N(6),N(6)-trimethyl-L-lysyl-[protein] + 3 S-adenosyl-L-homocysteine + 3 H(+)</text>
        <dbReference type="Rhea" id="RHEA:54192"/>
        <dbReference type="Rhea" id="RHEA-COMP:9752"/>
        <dbReference type="Rhea" id="RHEA-COMP:13826"/>
        <dbReference type="ChEBI" id="CHEBI:15378"/>
        <dbReference type="ChEBI" id="CHEBI:29969"/>
        <dbReference type="ChEBI" id="CHEBI:57856"/>
        <dbReference type="ChEBI" id="CHEBI:59789"/>
        <dbReference type="ChEBI" id="CHEBI:61961"/>
    </reaction>
</comment>
<comment type="subcellular location">
    <subcellularLocation>
        <location evidence="1">Cytoplasm</location>
    </subcellularLocation>
</comment>
<comment type="similarity">
    <text evidence="1">Belongs to the methyltransferase superfamily. PrmA family.</text>
</comment>
<feature type="chain" id="PRO_1000083349" description="Ribosomal protein L11 methyltransferase">
    <location>
        <begin position="1"/>
        <end position="314"/>
    </location>
</feature>
<feature type="binding site" evidence="1">
    <location>
        <position position="164"/>
    </location>
    <ligand>
        <name>S-adenosyl-L-methionine</name>
        <dbReference type="ChEBI" id="CHEBI:59789"/>
    </ligand>
</feature>
<feature type="binding site" evidence="1">
    <location>
        <position position="185"/>
    </location>
    <ligand>
        <name>S-adenosyl-L-methionine</name>
        <dbReference type="ChEBI" id="CHEBI:59789"/>
    </ligand>
</feature>
<feature type="binding site" evidence="1">
    <location>
        <position position="207"/>
    </location>
    <ligand>
        <name>S-adenosyl-L-methionine</name>
        <dbReference type="ChEBI" id="CHEBI:59789"/>
    </ligand>
</feature>
<feature type="binding site" evidence="1">
    <location>
        <position position="249"/>
    </location>
    <ligand>
        <name>S-adenosyl-L-methionine</name>
        <dbReference type="ChEBI" id="CHEBI:59789"/>
    </ligand>
</feature>
<protein>
    <recommendedName>
        <fullName evidence="1">Ribosomal protein L11 methyltransferase</fullName>
        <shortName evidence="1">L11 Mtase</shortName>
        <ecNumber evidence="1">2.1.1.-</ecNumber>
    </recommendedName>
</protein>
<dbReference type="EC" id="2.1.1.-" evidence="1"/>
<dbReference type="EMBL" id="CP000721">
    <property type="protein sequence ID" value="ABR33018.1"/>
    <property type="molecule type" value="Genomic_DNA"/>
</dbReference>
<dbReference type="RefSeq" id="WP_011968178.1">
    <property type="nucleotide sequence ID" value="NC_009617.1"/>
</dbReference>
<dbReference type="SMR" id="A6LRN8"/>
<dbReference type="KEGG" id="cbe:Cbei_0834"/>
<dbReference type="eggNOG" id="COG2264">
    <property type="taxonomic scope" value="Bacteria"/>
</dbReference>
<dbReference type="HOGENOM" id="CLU_049382_0_1_9"/>
<dbReference type="Proteomes" id="UP000000565">
    <property type="component" value="Chromosome"/>
</dbReference>
<dbReference type="GO" id="GO:0005737">
    <property type="term" value="C:cytoplasm"/>
    <property type="evidence" value="ECO:0007669"/>
    <property type="project" value="UniProtKB-SubCell"/>
</dbReference>
<dbReference type="GO" id="GO:0016279">
    <property type="term" value="F:protein-lysine N-methyltransferase activity"/>
    <property type="evidence" value="ECO:0007669"/>
    <property type="project" value="RHEA"/>
</dbReference>
<dbReference type="GO" id="GO:0032259">
    <property type="term" value="P:methylation"/>
    <property type="evidence" value="ECO:0007669"/>
    <property type="project" value="UniProtKB-KW"/>
</dbReference>
<dbReference type="CDD" id="cd02440">
    <property type="entry name" value="AdoMet_MTases"/>
    <property type="match status" value="1"/>
</dbReference>
<dbReference type="Gene3D" id="3.40.50.150">
    <property type="entry name" value="Vaccinia Virus protein VP39"/>
    <property type="match status" value="1"/>
</dbReference>
<dbReference type="HAMAP" id="MF_00735">
    <property type="entry name" value="Methyltr_PrmA"/>
    <property type="match status" value="1"/>
</dbReference>
<dbReference type="InterPro" id="IPR050078">
    <property type="entry name" value="Ribosomal_L11_MeTrfase_PrmA"/>
</dbReference>
<dbReference type="InterPro" id="IPR004498">
    <property type="entry name" value="Ribosomal_PrmA_MeTrfase"/>
</dbReference>
<dbReference type="InterPro" id="IPR029063">
    <property type="entry name" value="SAM-dependent_MTases_sf"/>
</dbReference>
<dbReference type="NCBIfam" id="TIGR00406">
    <property type="entry name" value="prmA"/>
    <property type="match status" value="1"/>
</dbReference>
<dbReference type="PANTHER" id="PTHR43648">
    <property type="entry name" value="ELECTRON TRANSFER FLAVOPROTEIN BETA SUBUNIT LYSINE METHYLTRANSFERASE"/>
    <property type="match status" value="1"/>
</dbReference>
<dbReference type="PANTHER" id="PTHR43648:SF1">
    <property type="entry name" value="ELECTRON TRANSFER FLAVOPROTEIN BETA SUBUNIT LYSINE METHYLTRANSFERASE"/>
    <property type="match status" value="1"/>
</dbReference>
<dbReference type="Pfam" id="PF06325">
    <property type="entry name" value="PrmA"/>
    <property type="match status" value="1"/>
</dbReference>
<dbReference type="PIRSF" id="PIRSF000401">
    <property type="entry name" value="RPL11_MTase"/>
    <property type="match status" value="1"/>
</dbReference>
<dbReference type="SUPFAM" id="SSF53335">
    <property type="entry name" value="S-adenosyl-L-methionine-dependent methyltransferases"/>
    <property type="match status" value="1"/>
</dbReference>
<gene>
    <name evidence="1" type="primary">prmA</name>
    <name type="ordered locus">Cbei_0834</name>
</gene>
<organism>
    <name type="scientific">Clostridium beijerinckii (strain ATCC 51743 / NCIMB 8052)</name>
    <name type="common">Clostridium acetobutylicum</name>
    <dbReference type="NCBI Taxonomy" id="290402"/>
    <lineage>
        <taxon>Bacteria</taxon>
        <taxon>Bacillati</taxon>
        <taxon>Bacillota</taxon>
        <taxon>Clostridia</taxon>
        <taxon>Eubacteriales</taxon>
        <taxon>Clostridiaceae</taxon>
        <taxon>Clostridium</taxon>
    </lineage>
</organism>
<sequence>MDGIWIEVSVITKSEALEPISGIFYGLNCPNVAIEDPEDLLSRDQGPLTWDFADINILEHKGNAAVVKAYFSQDDKVEEIVEYVKEKLSEIKEFGIDIGEGTVEAKKMHEEDWANNWKQYYKPVKITDKIVVKPIWEEYEKNDEELIIELDPGMAFGTGTHETTRMCIQALDKYVKPDTTVFDVGCGSGILAIAAAKLGAKHVVGVDLDPVAVDSSKENISFNNLNNIEVLEGNLLDVVDGKADIVVANIIAEIICVLTEDVKKALNEGGLFITSGIIHDRVDMVTEKFAECGFEVIEINKDGEWNCIVAKAIN</sequence>
<reference key="1">
    <citation type="submission" date="2007-06" db="EMBL/GenBank/DDBJ databases">
        <title>Complete sequence of Clostridium beijerinckii NCIMB 8052.</title>
        <authorList>
            <consortium name="US DOE Joint Genome Institute"/>
            <person name="Copeland A."/>
            <person name="Lucas S."/>
            <person name="Lapidus A."/>
            <person name="Barry K."/>
            <person name="Detter J.C."/>
            <person name="Glavina del Rio T."/>
            <person name="Hammon N."/>
            <person name="Israni S."/>
            <person name="Dalin E."/>
            <person name="Tice H."/>
            <person name="Pitluck S."/>
            <person name="Sims D."/>
            <person name="Brettin T."/>
            <person name="Bruce D."/>
            <person name="Tapia R."/>
            <person name="Brainard J."/>
            <person name="Schmutz J."/>
            <person name="Larimer F."/>
            <person name="Land M."/>
            <person name="Hauser L."/>
            <person name="Kyrpides N."/>
            <person name="Mikhailova N."/>
            <person name="Bennet G."/>
            <person name="Cann I."/>
            <person name="Chen J.-S."/>
            <person name="Contreras A.L."/>
            <person name="Jones D."/>
            <person name="Kashket E."/>
            <person name="Mitchell W."/>
            <person name="Stoddard S."/>
            <person name="Schwarz W."/>
            <person name="Qureshi N."/>
            <person name="Young M."/>
            <person name="Shi Z."/>
            <person name="Ezeji T."/>
            <person name="White B."/>
            <person name="Blaschek H."/>
            <person name="Richardson P."/>
        </authorList>
    </citation>
    <scope>NUCLEOTIDE SEQUENCE [LARGE SCALE GENOMIC DNA]</scope>
    <source>
        <strain>ATCC 51743 / NCIMB 8052</strain>
    </source>
</reference>
<name>PRMA_CLOB8</name>
<evidence type="ECO:0000255" key="1">
    <source>
        <dbReference type="HAMAP-Rule" id="MF_00735"/>
    </source>
</evidence>